<name>CXA8_CHICK</name>
<dbReference type="EMBL" id="L24799">
    <property type="protein sequence ID" value="AAA57134.1"/>
    <property type="molecule type" value="Genomic_DNA"/>
</dbReference>
<dbReference type="EMBL" id="D26333">
    <property type="protein sequence ID" value="BAA05381.1"/>
    <property type="molecule type" value="mRNA"/>
</dbReference>
<dbReference type="PIR" id="I50219">
    <property type="entry name" value="I50219"/>
</dbReference>
<dbReference type="RefSeq" id="NP_990328.1">
    <property type="nucleotide sequence ID" value="NM_204997.1"/>
</dbReference>
<dbReference type="SMR" id="P36381"/>
<dbReference type="FunCoup" id="P36381">
    <property type="interactions" value="2"/>
</dbReference>
<dbReference type="IntAct" id="P36381">
    <property type="interactions" value="1"/>
</dbReference>
<dbReference type="STRING" id="9031.ENSGALP00000036053"/>
<dbReference type="iPTMnet" id="P36381"/>
<dbReference type="PaxDb" id="9031-ENSGALP00000036053"/>
<dbReference type="GeneID" id="395846"/>
<dbReference type="KEGG" id="gga:395846"/>
<dbReference type="CTD" id="2703"/>
<dbReference type="VEuPathDB" id="HostDB:geneid_395846"/>
<dbReference type="eggNOG" id="ENOG502QV1K">
    <property type="taxonomic scope" value="Eukaryota"/>
</dbReference>
<dbReference type="InParanoid" id="P36381"/>
<dbReference type="OrthoDB" id="9941830at2759"/>
<dbReference type="PhylomeDB" id="P36381"/>
<dbReference type="PRO" id="PR:P36381"/>
<dbReference type="Proteomes" id="UP000000539">
    <property type="component" value="Unassembled WGS sequence"/>
</dbReference>
<dbReference type="GO" id="GO:0005922">
    <property type="term" value="C:connexin complex"/>
    <property type="evidence" value="ECO:0000250"/>
    <property type="project" value="UniProtKB"/>
</dbReference>
<dbReference type="GO" id="GO:0005886">
    <property type="term" value="C:plasma membrane"/>
    <property type="evidence" value="ECO:0000250"/>
    <property type="project" value="UniProtKB"/>
</dbReference>
<dbReference type="GO" id="GO:0005243">
    <property type="term" value="F:gap junction channel activity"/>
    <property type="evidence" value="ECO:0000250"/>
    <property type="project" value="UniProtKB"/>
</dbReference>
<dbReference type="GO" id="GO:0007267">
    <property type="term" value="P:cell-cell signaling"/>
    <property type="evidence" value="ECO:0000318"/>
    <property type="project" value="GO_Central"/>
</dbReference>
<dbReference type="GO" id="GO:1990349">
    <property type="term" value="P:gap junction-mediated intercellular transport"/>
    <property type="evidence" value="ECO:0000250"/>
    <property type="project" value="UniProtKB"/>
</dbReference>
<dbReference type="FunFam" id="1.20.1440.80:FF:000002">
    <property type="entry name" value="Gap junction protein"/>
    <property type="match status" value="1"/>
</dbReference>
<dbReference type="Gene3D" id="1.20.1440.80">
    <property type="entry name" value="Gap junction channel protein cysteine-rich domain"/>
    <property type="match status" value="1"/>
</dbReference>
<dbReference type="InterPro" id="IPR000500">
    <property type="entry name" value="Connexin"/>
</dbReference>
<dbReference type="InterPro" id="IPR002266">
    <property type="entry name" value="Connexin50"/>
</dbReference>
<dbReference type="InterPro" id="IPR019570">
    <property type="entry name" value="Connexin_CCC"/>
</dbReference>
<dbReference type="InterPro" id="IPR017990">
    <property type="entry name" value="Connexin_CS"/>
</dbReference>
<dbReference type="InterPro" id="IPR013092">
    <property type="entry name" value="Connexin_N"/>
</dbReference>
<dbReference type="InterPro" id="IPR038359">
    <property type="entry name" value="Connexin_N_sf"/>
</dbReference>
<dbReference type="PANTHER" id="PTHR11984">
    <property type="entry name" value="CONNEXIN"/>
    <property type="match status" value="1"/>
</dbReference>
<dbReference type="PANTHER" id="PTHR11984:SF19">
    <property type="entry name" value="GAP JUNCTION ALPHA-8 PROTEIN"/>
    <property type="match status" value="1"/>
</dbReference>
<dbReference type="Pfam" id="PF00029">
    <property type="entry name" value="Connexin"/>
    <property type="match status" value="1"/>
</dbReference>
<dbReference type="Pfam" id="PF03509">
    <property type="entry name" value="Connexin50"/>
    <property type="match status" value="1"/>
</dbReference>
<dbReference type="PRINTS" id="PR00206">
    <property type="entry name" value="CONNEXIN"/>
</dbReference>
<dbReference type="PRINTS" id="PR01137">
    <property type="entry name" value="CONNEXINA8"/>
</dbReference>
<dbReference type="SMART" id="SM00037">
    <property type="entry name" value="CNX"/>
    <property type="match status" value="1"/>
</dbReference>
<dbReference type="SMART" id="SM01089">
    <property type="entry name" value="Connexin_CCC"/>
    <property type="match status" value="1"/>
</dbReference>
<dbReference type="PROSITE" id="PS00407">
    <property type="entry name" value="CONNEXINS_1"/>
    <property type="match status" value="1"/>
</dbReference>
<dbReference type="PROSITE" id="PS00408">
    <property type="entry name" value="CONNEXINS_2"/>
    <property type="match status" value="1"/>
</dbReference>
<evidence type="ECO:0000250" key="1">
    <source>
        <dbReference type="UniProtKB" id="P55917"/>
    </source>
</evidence>
<evidence type="ECO:0000256" key="2">
    <source>
        <dbReference type="SAM" id="MobiDB-lite"/>
    </source>
</evidence>
<evidence type="ECO:0000269" key="3">
    <source>
    </source>
</evidence>
<evidence type="ECO:0000269" key="4">
    <source>
    </source>
</evidence>
<evidence type="ECO:0000269" key="5">
    <source>
    </source>
</evidence>
<evidence type="ECO:0000269" key="6">
    <source>
    </source>
</evidence>
<evidence type="ECO:0000303" key="7">
    <source>
    </source>
</evidence>
<evidence type="ECO:0000305" key="8"/>
<evidence type="ECO:0000305" key="9">
    <source>
    </source>
</evidence>
<keyword id="KW-0965">Cell junction</keyword>
<keyword id="KW-1003">Cell membrane</keyword>
<keyword id="KW-1015">Disulfide bond</keyword>
<keyword id="KW-0303">Gap junction</keyword>
<keyword id="KW-0472">Membrane</keyword>
<keyword id="KW-0597">Phosphoprotein</keyword>
<keyword id="KW-1185">Reference proteome</keyword>
<keyword id="KW-0812">Transmembrane</keyword>
<keyword id="KW-1133">Transmembrane helix</keyword>
<proteinExistence type="evidence at protein level"/>
<accession>P36381</accession>
<accession>Q92144</accession>
<feature type="initiator methionine" description="Removed" evidence="1">
    <location>
        <position position="1"/>
    </location>
</feature>
<feature type="chain" id="PRO_0000057833" description="Gap junction alpha-8 protein">
    <location>
        <begin position="2"/>
        <end position="400"/>
    </location>
</feature>
<feature type="intramembrane region" evidence="1">
    <location>
        <begin position="2"/>
        <end position="12"/>
    </location>
</feature>
<feature type="topological domain" description="Cytoplasmic" evidence="8">
    <location>
        <begin position="13"/>
        <end position="21"/>
    </location>
</feature>
<feature type="transmembrane region" description="Helical" evidence="1">
    <location>
        <begin position="22"/>
        <end position="42"/>
    </location>
</feature>
<feature type="topological domain" description="Extracellular" evidence="8">
    <location>
        <begin position="43"/>
        <end position="71"/>
    </location>
</feature>
<feature type="transmembrane region" description="Helical" evidence="1">
    <location>
        <begin position="72"/>
        <end position="92"/>
    </location>
</feature>
<feature type="topological domain" description="Cytoplasmic" evidence="8">
    <location>
        <begin position="93"/>
        <end position="156"/>
    </location>
</feature>
<feature type="transmembrane region" description="Helical" evidence="1">
    <location>
        <begin position="157"/>
        <end position="177"/>
    </location>
</feature>
<feature type="topological domain" description="Extracellular" evidence="8">
    <location>
        <begin position="178"/>
        <end position="205"/>
    </location>
</feature>
<feature type="transmembrane region" description="Helical" evidence="1">
    <location>
        <begin position="206"/>
        <end position="226"/>
    </location>
</feature>
<feature type="topological domain" description="Cytoplasmic" evidence="8">
    <location>
        <begin position="227"/>
        <end position="400"/>
    </location>
</feature>
<feature type="region of interest" description="Disordered" evidence="2">
    <location>
        <begin position="104"/>
        <end position="139"/>
    </location>
</feature>
<feature type="region of interest" description="Disordered" evidence="2">
    <location>
        <begin position="323"/>
        <end position="400"/>
    </location>
</feature>
<feature type="compositionally biased region" description="Basic and acidic residues" evidence="2">
    <location>
        <begin position="104"/>
        <end position="118"/>
    </location>
</feature>
<feature type="compositionally biased region" description="Polar residues" evidence="2">
    <location>
        <begin position="129"/>
        <end position="138"/>
    </location>
</feature>
<feature type="compositionally biased region" description="Basic and acidic residues" evidence="2">
    <location>
        <begin position="327"/>
        <end position="336"/>
    </location>
</feature>
<feature type="compositionally biased region" description="Acidic residues" evidence="2">
    <location>
        <begin position="337"/>
        <end position="346"/>
    </location>
</feature>
<feature type="compositionally biased region" description="Low complexity" evidence="2">
    <location>
        <begin position="381"/>
        <end position="392"/>
    </location>
</feature>
<feature type="site" description="Cleavage; by caspase-3">
    <location>
        <begin position="368"/>
        <end position="369"/>
    </location>
</feature>
<feature type="modified residue" description="Phosphoserine; by CK2" evidence="3 4">
    <location>
        <position position="364"/>
    </location>
</feature>
<feature type="disulfide bond" evidence="1">
    <location>
        <begin position="54"/>
        <end position="196"/>
    </location>
</feature>
<feature type="disulfide bond" evidence="1">
    <location>
        <begin position="61"/>
        <end position="190"/>
    </location>
</feature>
<feature type="disulfide bond" evidence="1">
    <location>
        <begin position="65"/>
        <end position="185"/>
    </location>
</feature>
<feature type="mutagenesis site" description="Prevents degradation." evidence="3">
    <original>S</original>
    <variation>A</variation>
    <location>
        <position position="364"/>
    </location>
</feature>
<feature type="mutagenesis site" description="Prevents cleavage by caspase-3." evidence="4">
    <original>D</original>
    <variation>A</variation>
    <location>
        <position position="365"/>
    </location>
</feature>
<feature type="mutagenesis site" description="Prevents cleavage by caspase-3." evidence="4">
    <original>E</original>
    <variation>A</variation>
    <location>
        <position position="368"/>
    </location>
</feature>
<feature type="mutagenesis site" description="Increases cleavage by caspase-3." evidence="4">
    <original>E</original>
    <variation>D</variation>
    <location>
        <position position="368"/>
    </location>
</feature>
<feature type="sequence conflict" description="In Ref. 2; BAA05381." evidence="8" ref="2">
    <original>EG</original>
    <variation>DL</variation>
    <location>
        <begin position="146"/>
        <end position="147"/>
    </location>
</feature>
<feature type="sequence conflict" description="In Ref. 2; BAA05381." evidence="8" ref="2">
    <original>WP</original>
    <variation>D</variation>
    <location>
        <begin position="188"/>
        <end position="189"/>
    </location>
</feature>
<feature type="sequence conflict" description="In Ref. 2; BAA05381." evidence="8" ref="2">
    <original>IRR</original>
    <variation>SEL</variation>
    <location>
        <begin position="234"/>
        <end position="236"/>
    </location>
</feature>
<comment type="function">
    <text evidence="1 6">Structural component of eye lens gap junctions (PubMed:8049527). Gap junctions are dodecameric channels that connect the cytoplasm of adjoining cells. They are formed by the docking of two hexameric hemichannels, one from each cell membrane (By similarity). Small molecules and ions diffuse from one cell to a neighboring cell via the central pore (PubMed:8049527).</text>
</comment>
<comment type="subunit">
    <text evidence="1 5">A hemichannel or connexon is composed of a hexamer of connexins. A functional gap junction is formed by the apposition of two hemichannels. Forms heteromeric channels with GJA3 (By similarity). During early stages of lens development, interacts with the C-terminus of MIP (PubMed:14762116).</text>
</comment>
<comment type="interaction">
    <interactant intactId="EBI-867402">
        <id>P36381</id>
    </interactant>
    <interactant intactId="EBI-867385">
        <id>P28238</id>
        <label>MIP</label>
    </interactant>
    <organismsDiffer>false</organismsDiffer>
    <experiments>11</experiments>
</comment>
<comment type="subcellular location">
    <subcellularLocation>
        <location evidence="6">Cell membrane</location>
        <topology evidence="1">Multi-pass membrane protein</topology>
    </subcellularLocation>
    <subcellularLocation>
        <location evidence="9">Cell junction</location>
        <location evidence="9">Gap junction</location>
    </subcellularLocation>
</comment>
<comment type="PTM">
    <text evidence="4">Proteolytically cleaved by caspase-3 during lens development.</text>
</comment>
<comment type="PTM">
    <text evidence="3 4">Phosphorylated on Ser-364; which inhibits cleavage by caspase-3.</text>
</comment>
<comment type="similarity">
    <text evidence="8">Belongs to the connexin family. Alpha-type (group II) subfamily.</text>
</comment>
<protein>
    <recommendedName>
        <fullName>Gap junction alpha-8 protein</fullName>
    </recommendedName>
    <alternativeName>
        <fullName evidence="7">Connexin-45.6</fullName>
        <shortName>Cx45.6</shortName>
    </alternativeName>
</protein>
<gene>
    <name type="primary">GJA8</name>
</gene>
<organism>
    <name type="scientific">Gallus gallus</name>
    <name type="common">Chicken</name>
    <dbReference type="NCBI Taxonomy" id="9031"/>
    <lineage>
        <taxon>Eukaryota</taxon>
        <taxon>Metazoa</taxon>
        <taxon>Chordata</taxon>
        <taxon>Craniata</taxon>
        <taxon>Vertebrata</taxon>
        <taxon>Euteleostomi</taxon>
        <taxon>Archelosauria</taxon>
        <taxon>Archosauria</taxon>
        <taxon>Dinosauria</taxon>
        <taxon>Saurischia</taxon>
        <taxon>Theropoda</taxon>
        <taxon>Coelurosauria</taxon>
        <taxon>Aves</taxon>
        <taxon>Neognathae</taxon>
        <taxon>Galloanserae</taxon>
        <taxon>Galliformes</taxon>
        <taxon>Phasianidae</taxon>
        <taxon>Phasianinae</taxon>
        <taxon>Gallus</taxon>
    </lineage>
</organism>
<sequence>MGDWSFLGNILEQVNEQSTVIGRVWLTVLFIFRILILGTAAELVWGDEQSDFVCNTQQPGCENVCYDEAFPISHIRLWVLQIIFVSTPSLVYFGHAVHHVRMEEKRKEREEAERRQQAEVDEEKLPLAPNQNKGNNPDGTKKFRLEGTLLRTYILHIIFKTLFEVGFIVGQYFLYGFRILPLYRCGRWPCPNLVDCFVSRPTEKTIFIMFMLVVAAVSLFLNLVEISHLILKRIRRALRRPAEEQMGEVPEKPLHAIAVSSIPKAKGYKLLEEEKPVSHYFPLTEVGVEPSPLPSAFNEFEEKIGMGPLEDLSRAFDERLPSYAQAKEPEEEKVKAEEEEEQEEEQQAPQEEPGVKKAEEEVVSDEVEGPSAPAELATDVRSLSRLSKASSRARSDDLTV</sequence>
<reference key="1">
    <citation type="journal article" date="1994" name="Mol. Biol. Cell">
        <title>Molecular cloning and functional characterization of chick lens fiber connexin 45.6.</title>
        <authorList>
            <person name="Jiang J.X."/>
            <person name="White T.W."/>
            <person name="Goodenough D.A."/>
            <person name="Paul D.L."/>
        </authorList>
    </citation>
    <scope>NUCLEOTIDE SEQUENCE [GENOMIC DNA]</scope>
    <scope>TISSUE SPECIFICITY</scope>
    <scope>FUNCTION</scope>
    <scope>SUBCELLULAR LOCATION</scope>
    <source>
        <tissue>Lens</tissue>
    </source>
</reference>
<reference key="2">
    <citation type="journal article" date="1996" name="Int. J. Dev. Biol.">
        <title>Characterization of terminally differentiated cell state by categorizing cDNA clones derived from chicken lens fibers.</title>
        <authorList>
            <person name="Sawada K."/>
            <person name="Agata K."/>
            <person name="Eguchi G."/>
        </authorList>
    </citation>
    <scope>NUCLEOTIDE SEQUENCE [MRNA] OF 1-236</scope>
    <source>
        <tissue>Lens fibers</tissue>
    </source>
</reference>
<reference key="3">
    <citation type="journal article" date="2000" name="J. Biol. Chem.">
        <title>Casein kinase II phosphorylates lens connexin 45.6 and is involved in its degradation.</title>
        <authorList>
            <person name="Yin X."/>
            <person name="Jedrzejewski P.T."/>
            <person name="Jiang J.X."/>
        </authorList>
    </citation>
    <scope>PHOSPHORYLATION AT SER-364</scope>
    <scope>IDENTIFICATION BY MASS SPECTROMETRY</scope>
    <scope>MUTAGENESIS OF SER-364</scope>
</reference>
<reference key="4">
    <citation type="journal article" date="2001" name="J. Biol. Chem.">
        <title>The development-associated cleavage of lens connexin 45.6 by caspase-3-like protease is regulated by casein kinase II-mediated phosphorylation.</title>
        <authorList>
            <person name="Yin X."/>
            <person name="Gu S."/>
            <person name="Jiang J.X."/>
        </authorList>
    </citation>
    <scope>PHOSPHORYLATION AT SER-364</scope>
    <scope>CLEAVAGE SITE</scope>
    <scope>MUTAGENESIS OF ASP-365 AND GLU-368</scope>
</reference>
<reference key="5">
    <citation type="journal article" date="2004" name="J. Cell Sci.">
        <title>Interaction of major intrinsic protein (aquaporin-0) with fiber connexins in lens development.</title>
        <authorList>
            <person name="Yu X.S."/>
            <person name="Jiang J.X."/>
        </authorList>
    </citation>
    <scope>INTERACTION WITH MIP</scope>
</reference>